<protein>
    <recommendedName>
        <fullName evidence="1">Regulatory protein E2</fullName>
    </recommendedName>
</protein>
<organismHost>
    <name type="scientific">Homo sapiens</name>
    <name type="common">Human</name>
    <dbReference type="NCBI Taxonomy" id="9606"/>
</organismHost>
<comment type="function">
    <text evidence="1">Plays a role in the initiation of viral DNA replication. A dimer of E2 interacts with a dimer of E1 in order to improve specificity of E1 DNA binding activity. Once the complex recognizes and binds DNA at specific sites, the E2 dimer is removed from DNA. E2 also regulates viral transcription through binding to the E2RE response element (5'-ACCNNNNNNGGT-3') present in multiple copies in the regulatory regions of the viral genome. Activates or represses transcription depending on E2RE's position with regards to proximal promoter elements including the TATA-box. Repression occurs by sterically hindering the assembly of the transcription initiation complex.</text>
</comment>
<comment type="subunit">
    <text evidence="1">Binds DNA as homodimer. Interacts with protein E1; this interaction greatly increases E1 DNA-binding activity. Interacts with protein L1; this interaction enhances E2-dependent replication and transcription activation. Interacts with protein L2; this interaction inhibits E2 transcriptional activity but not DNA replication function E2. Interacts with protein E7; this interaction inhibits E7 oncogenic activity. Interacts with host TAF1; this interaction modulates E2-dependent transcriptional regulation. Interacts with host BRD4; this interaction mediates E2 transcriptional activation function. Additionally, the interaction with host BRD4 on mitotic chromosomes mediates tethering of the viral genome. Interacts with host TOPBP1; this interaction is required for optimal viral DNA replication.</text>
</comment>
<comment type="subcellular location">
    <subcellularLocation>
        <location evidence="1">Host nucleus</location>
    </subcellularLocation>
</comment>
<comment type="PTM">
    <text evidence="1">Phosphorylated.</text>
</comment>
<comment type="PTM">
    <text evidence="1">Sumoylation plays a regulatory role in E2 transcriptional activity.</text>
</comment>
<comment type="similarity">
    <text evidence="1">Belongs to the papillomaviridae E2 protein family.</text>
</comment>
<sequence>MENLSERFNALQDQLMNIYEAAEQTLQAQIKHWQTLRKEPVLLYYAREKGVTRLGYQPVPVKAVSETKAKEAIAMVLQLESLQTSDFAHEPWTLVDTSIETFRSAPEGHFKKGPLPVEVIYDNDPDNANLYTMWTYVYYMDADDKWHKARSGVNHIGIYYLQGTFKNYYVLFADDAKRYGTTGEWEVKVNKETVFAPVTSSTPPGSPGGQADTNTTPATPTTSTTAVDSTSRQLTTSKQPQQTETRGRRYGRRPSSKSRRSQTQQRRSRSRHRSRSRSRSRSKSQTHTTRSTTRSRSTSLTKTRALTSRSRSRGRSPTTCRRGGGRSPRRRSRSPSTSSSCTTQRSQRARAESSTTRGARGSRGSRGGSRGGRGRRRGRSSSSSSPAHKRSRGGSAKLRGVSPGEVGGSLRSVSSKHTGRLGRLLEEARDPPVIIVKGAANTLKNVRNRAKIKYMGLFRSFSTTWSWVAGDGTERLGRPRMLISFSSYTQRRDFDEAVRYPKGVDKAYGNLDSL</sequence>
<feature type="chain" id="PRO_0000133182" description="Regulatory protein E2">
    <location>
        <begin position="1"/>
        <end position="514"/>
    </location>
</feature>
<feature type="region of interest" description="Transactivation domain" evidence="1">
    <location>
        <begin position="1"/>
        <end position="201"/>
    </location>
</feature>
<feature type="region of interest" description="Disordered" evidence="2">
    <location>
        <begin position="197"/>
        <end position="424"/>
    </location>
</feature>
<feature type="region of interest" description="DNA-binding domain" evidence="1">
    <location>
        <begin position="430"/>
        <end position="514"/>
    </location>
</feature>
<feature type="compositionally biased region" description="Low complexity" evidence="2">
    <location>
        <begin position="199"/>
        <end position="231"/>
    </location>
</feature>
<feature type="compositionally biased region" description="Polar residues" evidence="2">
    <location>
        <begin position="232"/>
        <end position="244"/>
    </location>
</feature>
<feature type="compositionally biased region" description="Basic residues" evidence="2">
    <location>
        <begin position="248"/>
        <end position="284"/>
    </location>
</feature>
<feature type="compositionally biased region" description="Low complexity" evidence="2">
    <location>
        <begin position="285"/>
        <end position="321"/>
    </location>
</feature>
<feature type="compositionally biased region" description="Basic residues" evidence="2">
    <location>
        <begin position="323"/>
        <end position="333"/>
    </location>
</feature>
<feature type="compositionally biased region" description="Low complexity" evidence="2">
    <location>
        <begin position="334"/>
        <end position="346"/>
    </location>
</feature>
<feature type="cross-link" description="Glycyl lysine isopeptide (Lys-Gly) (interchain with G-Cter in SUMO)" evidence="1">
    <location>
        <position position="437"/>
    </location>
</feature>
<reference key="1">
    <citation type="journal article" date="1987" name="Virology">
        <title>Nucleotide sequence and genome organization of human papillomavirus type 5.</title>
        <authorList>
            <person name="Zachow K.R."/>
            <person name="Ostrow R.S."/>
            <person name="Faras A.J."/>
        </authorList>
    </citation>
    <scope>NUCLEOTIDE SEQUENCE [GENOMIC DNA]</scope>
</reference>
<proteinExistence type="inferred from homology"/>
<gene>
    <name evidence="1" type="primary">E2</name>
</gene>
<dbReference type="EMBL" id="M17463">
    <property type="protein sequence ID" value="AAA46986.1"/>
    <property type="molecule type" value="Genomic_DNA"/>
</dbReference>
<dbReference type="PIR" id="D26277">
    <property type="entry name" value="W2WL5"/>
</dbReference>
<dbReference type="RefSeq" id="NP_041368.1">
    <property type="nucleotide sequence ID" value="NC_001531.1"/>
</dbReference>
<dbReference type="SMR" id="P06921"/>
<dbReference type="BioGRID" id="4263590">
    <property type="interactions" value="9"/>
</dbReference>
<dbReference type="IntAct" id="P06921">
    <property type="interactions" value="87"/>
</dbReference>
<dbReference type="MINT" id="P06921"/>
<dbReference type="GeneID" id="1489050"/>
<dbReference type="KEGG" id="vg:1489050"/>
<dbReference type="OrthoDB" id="15886at10239"/>
<dbReference type="Proteomes" id="UP000009252">
    <property type="component" value="Genome"/>
</dbReference>
<dbReference type="GO" id="GO:0042025">
    <property type="term" value="C:host cell nucleus"/>
    <property type="evidence" value="ECO:0007669"/>
    <property type="project" value="UniProtKB-SubCell"/>
</dbReference>
<dbReference type="GO" id="GO:0003677">
    <property type="term" value="F:DNA binding"/>
    <property type="evidence" value="ECO:0007669"/>
    <property type="project" value="UniProtKB-UniRule"/>
</dbReference>
<dbReference type="GO" id="GO:0003700">
    <property type="term" value="F:DNA-binding transcription factor activity"/>
    <property type="evidence" value="ECO:0007669"/>
    <property type="project" value="UniProtKB-UniRule"/>
</dbReference>
<dbReference type="GO" id="GO:0000166">
    <property type="term" value="F:nucleotide binding"/>
    <property type="evidence" value="ECO:0007669"/>
    <property type="project" value="UniProtKB-UniRule"/>
</dbReference>
<dbReference type="GO" id="GO:0006260">
    <property type="term" value="P:DNA replication"/>
    <property type="evidence" value="ECO:0007669"/>
    <property type="project" value="UniProtKB-KW"/>
</dbReference>
<dbReference type="GO" id="GO:0006351">
    <property type="term" value="P:DNA-templated transcription"/>
    <property type="evidence" value="ECO:0007669"/>
    <property type="project" value="UniProtKB-UniRule"/>
</dbReference>
<dbReference type="GO" id="GO:0006275">
    <property type="term" value="P:regulation of DNA replication"/>
    <property type="evidence" value="ECO:0007669"/>
    <property type="project" value="UniProtKB-UniRule"/>
</dbReference>
<dbReference type="GO" id="GO:0039693">
    <property type="term" value="P:viral DNA genome replication"/>
    <property type="evidence" value="ECO:0007669"/>
    <property type="project" value="UniProtKB-UniRule"/>
</dbReference>
<dbReference type="Gene3D" id="3.30.70.330">
    <property type="match status" value="1"/>
</dbReference>
<dbReference type="Gene3D" id="1.10.287.30">
    <property type="entry name" value="E2 (early) protein, N terminal domain, subdomain 1"/>
    <property type="match status" value="1"/>
</dbReference>
<dbReference type="Gene3D" id="2.170.200.10">
    <property type="entry name" value="Papillomavirus E2 early protein domain"/>
    <property type="match status" value="1"/>
</dbReference>
<dbReference type="HAMAP" id="MF_04001">
    <property type="entry name" value="PPV_E2"/>
    <property type="match status" value="1"/>
</dbReference>
<dbReference type="InterPro" id="IPR035975">
    <property type="entry name" value="E2/EBNA1_C_sf"/>
</dbReference>
<dbReference type="InterPro" id="IPR012677">
    <property type="entry name" value="Nucleotide-bd_a/b_plait_sf"/>
</dbReference>
<dbReference type="InterPro" id="IPR000427">
    <property type="entry name" value="Papillomavirus_E2_C"/>
</dbReference>
<dbReference type="InterPro" id="IPR001866">
    <property type="entry name" value="PPV_E2_N"/>
</dbReference>
<dbReference type="InterPro" id="IPR033668">
    <property type="entry name" value="Reg_prot_E2"/>
</dbReference>
<dbReference type="InterPro" id="IPR036050">
    <property type="entry name" value="Regulatory_protein_E2_N"/>
</dbReference>
<dbReference type="InterPro" id="IPR042503">
    <property type="entry name" value="Regulatory_protein_E2_N_1"/>
</dbReference>
<dbReference type="InterPro" id="IPR042504">
    <property type="entry name" value="Regulatory_protein_E2_N_2"/>
</dbReference>
<dbReference type="Pfam" id="PF00511">
    <property type="entry name" value="PPV_E2_C"/>
    <property type="match status" value="1"/>
</dbReference>
<dbReference type="Pfam" id="PF00508">
    <property type="entry name" value="PPV_E2_N"/>
    <property type="match status" value="1"/>
</dbReference>
<dbReference type="SUPFAM" id="SSF51332">
    <property type="entry name" value="E2 regulatory, transactivation domain"/>
    <property type="match status" value="1"/>
</dbReference>
<dbReference type="SUPFAM" id="SSF54957">
    <property type="entry name" value="Viral DNA-binding domain"/>
    <property type="match status" value="1"/>
</dbReference>
<evidence type="ECO:0000255" key="1">
    <source>
        <dbReference type="HAMAP-Rule" id="MF_04001"/>
    </source>
</evidence>
<evidence type="ECO:0000256" key="2">
    <source>
        <dbReference type="SAM" id="MobiDB-lite"/>
    </source>
</evidence>
<name>VE2_HPV05</name>
<organism>
    <name type="scientific">Human papillomavirus 5</name>
    <dbReference type="NCBI Taxonomy" id="333923"/>
    <lineage>
        <taxon>Viruses</taxon>
        <taxon>Monodnaviria</taxon>
        <taxon>Shotokuvirae</taxon>
        <taxon>Cossaviricota</taxon>
        <taxon>Papovaviricetes</taxon>
        <taxon>Zurhausenvirales</taxon>
        <taxon>Papillomaviridae</taxon>
        <taxon>Firstpapillomavirinae</taxon>
        <taxon>Betapapillomavirus</taxon>
        <taxon>Betapapillomavirus 1</taxon>
    </lineage>
</organism>
<keyword id="KW-0010">Activator</keyword>
<keyword id="KW-0235">DNA replication</keyword>
<keyword id="KW-0238">DNA-binding</keyword>
<keyword id="KW-0244">Early protein</keyword>
<keyword id="KW-1048">Host nucleus</keyword>
<keyword id="KW-1017">Isopeptide bond</keyword>
<keyword id="KW-0597">Phosphoprotein</keyword>
<keyword id="KW-1185">Reference proteome</keyword>
<keyword id="KW-0678">Repressor</keyword>
<keyword id="KW-0804">Transcription</keyword>
<keyword id="KW-0805">Transcription regulation</keyword>
<keyword id="KW-0832">Ubl conjugation</keyword>
<accession>P06921</accession>